<feature type="chain" id="PRO_1000136246" description="L-carnitine CoA-transferase">
    <location>
        <begin position="1"/>
        <end position="405"/>
    </location>
</feature>
<feature type="active site" description="Nucleophile" evidence="1">
    <location>
        <position position="169"/>
    </location>
</feature>
<feature type="binding site" evidence="1">
    <location>
        <position position="97"/>
    </location>
    <ligand>
        <name>CoA</name>
        <dbReference type="ChEBI" id="CHEBI:57287"/>
    </ligand>
</feature>
<feature type="binding site" evidence="1">
    <location>
        <position position="104"/>
    </location>
    <ligand>
        <name>CoA</name>
        <dbReference type="ChEBI" id="CHEBI:57287"/>
    </ligand>
</feature>
<proteinExistence type="inferred from homology"/>
<organism>
    <name type="scientific">Escherichia coli O157:H7 (strain EC4115 / EHEC)</name>
    <dbReference type="NCBI Taxonomy" id="444450"/>
    <lineage>
        <taxon>Bacteria</taxon>
        <taxon>Pseudomonadati</taxon>
        <taxon>Pseudomonadota</taxon>
        <taxon>Gammaproteobacteria</taxon>
        <taxon>Enterobacterales</taxon>
        <taxon>Enterobacteriaceae</taxon>
        <taxon>Escherichia</taxon>
    </lineage>
</organism>
<name>CAIB_ECO5E</name>
<dbReference type="EC" id="2.8.3.21" evidence="1"/>
<dbReference type="EMBL" id="CP001164">
    <property type="protein sequence ID" value="ACI36272.1"/>
    <property type="molecule type" value="Genomic_DNA"/>
</dbReference>
<dbReference type="RefSeq" id="WP_000349922.1">
    <property type="nucleotide sequence ID" value="NC_011353.1"/>
</dbReference>
<dbReference type="SMR" id="B5YYD2"/>
<dbReference type="KEGG" id="ecf:ECH74115_0042"/>
<dbReference type="HOGENOM" id="CLU_033975_2_0_6"/>
<dbReference type="UniPathway" id="UPA00117"/>
<dbReference type="GO" id="GO:0005737">
    <property type="term" value="C:cytoplasm"/>
    <property type="evidence" value="ECO:0007669"/>
    <property type="project" value="UniProtKB-SubCell"/>
</dbReference>
<dbReference type="GO" id="GO:0008735">
    <property type="term" value="F:L-carnitine CoA-transferase activity"/>
    <property type="evidence" value="ECO:0007669"/>
    <property type="project" value="RHEA"/>
</dbReference>
<dbReference type="GO" id="GO:0009437">
    <property type="term" value="P:carnitine metabolic process"/>
    <property type="evidence" value="ECO:0007669"/>
    <property type="project" value="UniProtKB-UniRule"/>
</dbReference>
<dbReference type="FunFam" id="3.30.1540.10:FF:000001">
    <property type="entry name" value="L-carnitine CoA-transferase"/>
    <property type="match status" value="1"/>
</dbReference>
<dbReference type="Gene3D" id="3.40.50.10540">
    <property type="entry name" value="Crotonobetainyl-coa:carnitine coa-transferase, domain 1"/>
    <property type="match status" value="1"/>
</dbReference>
<dbReference type="Gene3D" id="3.30.1540.10">
    <property type="entry name" value="formyl-coa transferase, domain 3"/>
    <property type="match status" value="1"/>
</dbReference>
<dbReference type="HAMAP" id="MF_01050">
    <property type="entry name" value="CaiB"/>
    <property type="match status" value="1"/>
</dbReference>
<dbReference type="InterPro" id="IPR050509">
    <property type="entry name" value="CoA-transferase_III"/>
</dbReference>
<dbReference type="InterPro" id="IPR023452">
    <property type="entry name" value="CoA-Trfase_CaiB"/>
</dbReference>
<dbReference type="InterPro" id="IPR003673">
    <property type="entry name" value="CoA-Trfase_fam_III"/>
</dbReference>
<dbReference type="InterPro" id="IPR044855">
    <property type="entry name" value="CoA-Trfase_III_dom3_sf"/>
</dbReference>
<dbReference type="InterPro" id="IPR023606">
    <property type="entry name" value="CoA-Trfase_III_dom_1_sf"/>
</dbReference>
<dbReference type="NCBIfam" id="NF002914">
    <property type="entry name" value="PRK03525.1"/>
    <property type="match status" value="1"/>
</dbReference>
<dbReference type="PANTHER" id="PTHR48228:SF6">
    <property type="entry name" value="L-CARNITINE COA-TRANSFERASE"/>
    <property type="match status" value="1"/>
</dbReference>
<dbReference type="PANTHER" id="PTHR48228">
    <property type="entry name" value="SUCCINYL-COA--D-CITRAMALATE COA-TRANSFERASE"/>
    <property type="match status" value="1"/>
</dbReference>
<dbReference type="Pfam" id="PF02515">
    <property type="entry name" value="CoA_transf_3"/>
    <property type="match status" value="1"/>
</dbReference>
<dbReference type="SUPFAM" id="SSF89796">
    <property type="entry name" value="CoA-transferase family III (CaiB/BaiF)"/>
    <property type="match status" value="1"/>
</dbReference>
<protein>
    <recommendedName>
        <fullName evidence="1">L-carnitine CoA-transferase</fullName>
        <ecNumber evidence="1">2.8.3.21</ecNumber>
    </recommendedName>
    <alternativeName>
        <fullName evidence="1">Crotonobetainyl-CoA:carnitine CoA-transferase</fullName>
    </alternativeName>
</protein>
<gene>
    <name evidence="1" type="primary">caiB</name>
    <name type="ordered locus">ECH74115_0042</name>
</gene>
<evidence type="ECO:0000255" key="1">
    <source>
        <dbReference type="HAMAP-Rule" id="MF_01050"/>
    </source>
</evidence>
<sequence>MDHLPMPKFGPLAGLRVVFSGIEIAGPFAGQMFAEWGAEVIWIENVAWADTIRVQPNYPQLSRRNLHALSLNIFKDEGREAFLKLMETTDIFIEASKGPAFARRGITDEVLWQHNPKLVIAHLSGFGQYGTEEYTNLPAYNTIAQAFSGYLIQNGDVDQPMPAFPYTADYFSGLTATTAALAALHKARETGKGESIDIAMYEVMLRMGQYFMMDYFNGGEMCPRMSKGKDPYYAGCGLYKCADGYIVMELVGITQIEECFKDIGLAHLLGTPEIPEGTQLIHRIECPYGPLVEEKLDAWLAAHTIAEVKERFAELNIACAKVLTVPELESNPQYVARESITQWQTMDGRTCKGPNIMPKFKNNPGQIWRGMPSHGMDTAAILKNIGYSENDIQELVSKGLAKVED</sequence>
<accession>B5YYD2</accession>
<keyword id="KW-0963">Cytoplasm</keyword>
<keyword id="KW-0808">Transferase</keyword>
<comment type="function">
    <text evidence="1">Catalyzes the reversible transfer of the CoA moiety from gamma-butyrobetainyl-CoA to L-carnitine to generate L-carnitinyl-CoA and gamma-butyrobetaine. Is also able to catalyze the reversible transfer of the CoA moiety from gamma-butyrobetainyl-CoA or L-carnitinyl-CoA to crotonobetaine to generate crotonobetainyl-CoA.</text>
</comment>
<comment type="catalytic activity">
    <reaction evidence="1">
        <text>crotonobetainyl-CoA + (R)-carnitine = crotonobetaine + (R)-carnitinyl-CoA</text>
        <dbReference type="Rhea" id="RHEA:28526"/>
        <dbReference type="ChEBI" id="CHEBI:16347"/>
        <dbReference type="ChEBI" id="CHEBI:17237"/>
        <dbReference type="ChEBI" id="CHEBI:60932"/>
        <dbReference type="ChEBI" id="CHEBI:60933"/>
        <dbReference type="EC" id="2.8.3.21"/>
    </reaction>
</comment>
<comment type="catalytic activity">
    <reaction evidence="1">
        <text>4-(trimethylamino)butanoyl-CoA + (R)-carnitine = (R)-carnitinyl-CoA + 4-(trimethylamino)butanoate</text>
        <dbReference type="Rhea" id="RHEA:28418"/>
        <dbReference type="ChEBI" id="CHEBI:16244"/>
        <dbReference type="ChEBI" id="CHEBI:16347"/>
        <dbReference type="ChEBI" id="CHEBI:60932"/>
        <dbReference type="ChEBI" id="CHEBI:61513"/>
        <dbReference type="EC" id="2.8.3.21"/>
    </reaction>
</comment>
<comment type="pathway">
    <text evidence="1">Amine and polyamine metabolism; carnitine metabolism.</text>
</comment>
<comment type="subunit">
    <text evidence="1">Homodimer.</text>
</comment>
<comment type="subcellular location">
    <subcellularLocation>
        <location evidence="1">Cytoplasm</location>
    </subcellularLocation>
</comment>
<comment type="similarity">
    <text evidence="1">Belongs to the CoA-transferase III family. CaiB subfamily.</text>
</comment>
<reference key="1">
    <citation type="journal article" date="2011" name="Proc. Natl. Acad. Sci. U.S.A.">
        <title>Genomic anatomy of Escherichia coli O157:H7 outbreaks.</title>
        <authorList>
            <person name="Eppinger M."/>
            <person name="Mammel M.K."/>
            <person name="Leclerc J.E."/>
            <person name="Ravel J."/>
            <person name="Cebula T.A."/>
        </authorList>
    </citation>
    <scope>NUCLEOTIDE SEQUENCE [LARGE SCALE GENOMIC DNA]</scope>
    <source>
        <strain>EC4115 / EHEC</strain>
    </source>
</reference>